<name>DAPF_LEPBJ</name>
<keyword id="KW-0028">Amino-acid biosynthesis</keyword>
<keyword id="KW-0963">Cytoplasm</keyword>
<keyword id="KW-0413">Isomerase</keyword>
<keyword id="KW-0457">Lysine biosynthesis</keyword>
<gene>
    <name evidence="1" type="primary">dapF</name>
    <name type="ordered locus">LBJ_0071</name>
</gene>
<proteinExistence type="inferred from homology"/>
<accession>Q04W97</accession>
<dbReference type="EC" id="5.1.1.7" evidence="1"/>
<dbReference type="EMBL" id="CP000350">
    <property type="protein sequence ID" value="ABJ74823.1"/>
    <property type="molecule type" value="Genomic_DNA"/>
</dbReference>
<dbReference type="RefSeq" id="WP_002727865.1">
    <property type="nucleotide sequence ID" value="NC_008510.1"/>
</dbReference>
<dbReference type="SMR" id="Q04W97"/>
<dbReference type="KEGG" id="lbj:LBJ_0071"/>
<dbReference type="HOGENOM" id="CLU_053306_3_0_12"/>
<dbReference type="UniPathway" id="UPA00034">
    <property type="reaction ID" value="UER00025"/>
</dbReference>
<dbReference type="Proteomes" id="UP000000656">
    <property type="component" value="Chromosome 1"/>
</dbReference>
<dbReference type="GO" id="GO:0005829">
    <property type="term" value="C:cytosol"/>
    <property type="evidence" value="ECO:0007669"/>
    <property type="project" value="TreeGrafter"/>
</dbReference>
<dbReference type="GO" id="GO:0008837">
    <property type="term" value="F:diaminopimelate epimerase activity"/>
    <property type="evidence" value="ECO:0007669"/>
    <property type="project" value="UniProtKB-UniRule"/>
</dbReference>
<dbReference type="GO" id="GO:0009089">
    <property type="term" value="P:lysine biosynthetic process via diaminopimelate"/>
    <property type="evidence" value="ECO:0007669"/>
    <property type="project" value="UniProtKB-UniRule"/>
</dbReference>
<dbReference type="FunFam" id="3.10.310.10:FF:000001">
    <property type="entry name" value="Diaminopimelate epimerase"/>
    <property type="match status" value="1"/>
</dbReference>
<dbReference type="FunFam" id="3.10.310.10:FF:000004">
    <property type="entry name" value="Diaminopimelate epimerase"/>
    <property type="match status" value="1"/>
</dbReference>
<dbReference type="Gene3D" id="3.10.310.10">
    <property type="entry name" value="Diaminopimelate Epimerase, Chain A, domain 1"/>
    <property type="match status" value="2"/>
</dbReference>
<dbReference type="HAMAP" id="MF_00197">
    <property type="entry name" value="DAP_epimerase"/>
    <property type="match status" value="1"/>
</dbReference>
<dbReference type="InterPro" id="IPR018510">
    <property type="entry name" value="DAP_epimerase_AS"/>
</dbReference>
<dbReference type="InterPro" id="IPR001653">
    <property type="entry name" value="DAP_epimerase_DapF"/>
</dbReference>
<dbReference type="NCBIfam" id="TIGR00652">
    <property type="entry name" value="DapF"/>
    <property type="match status" value="1"/>
</dbReference>
<dbReference type="PANTHER" id="PTHR31689:SF0">
    <property type="entry name" value="DIAMINOPIMELATE EPIMERASE"/>
    <property type="match status" value="1"/>
</dbReference>
<dbReference type="PANTHER" id="PTHR31689">
    <property type="entry name" value="DIAMINOPIMELATE EPIMERASE, CHLOROPLASTIC"/>
    <property type="match status" value="1"/>
</dbReference>
<dbReference type="Pfam" id="PF01678">
    <property type="entry name" value="DAP_epimerase"/>
    <property type="match status" value="2"/>
</dbReference>
<dbReference type="SUPFAM" id="SSF54506">
    <property type="entry name" value="Diaminopimelate epimerase-like"/>
    <property type="match status" value="2"/>
</dbReference>
<dbReference type="PROSITE" id="PS01326">
    <property type="entry name" value="DAP_EPIMERASE"/>
    <property type="match status" value="1"/>
</dbReference>
<organism>
    <name type="scientific">Leptospira borgpetersenii serovar Hardjo-bovis (strain JB197)</name>
    <dbReference type="NCBI Taxonomy" id="355277"/>
    <lineage>
        <taxon>Bacteria</taxon>
        <taxon>Pseudomonadati</taxon>
        <taxon>Spirochaetota</taxon>
        <taxon>Spirochaetia</taxon>
        <taxon>Leptospirales</taxon>
        <taxon>Leptospiraceae</taxon>
        <taxon>Leptospira</taxon>
    </lineage>
</organism>
<evidence type="ECO:0000255" key="1">
    <source>
        <dbReference type="HAMAP-Rule" id="MF_00197"/>
    </source>
</evidence>
<comment type="function">
    <text evidence="1">Catalyzes the stereoinversion of LL-2,6-diaminopimelate (L,L-DAP) to meso-diaminopimelate (meso-DAP), a precursor of L-lysine and an essential component of the bacterial peptidoglycan.</text>
</comment>
<comment type="catalytic activity">
    <reaction evidence="1">
        <text>(2S,6S)-2,6-diaminopimelate = meso-2,6-diaminopimelate</text>
        <dbReference type="Rhea" id="RHEA:15393"/>
        <dbReference type="ChEBI" id="CHEBI:57609"/>
        <dbReference type="ChEBI" id="CHEBI:57791"/>
        <dbReference type="EC" id="5.1.1.7"/>
    </reaction>
</comment>
<comment type="pathway">
    <text evidence="1">Amino-acid biosynthesis; L-lysine biosynthesis via DAP pathway; DL-2,6-diaminopimelate from LL-2,6-diaminopimelate: step 1/1.</text>
</comment>
<comment type="subunit">
    <text evidence="1">Homodimer.</text>
</comment>
<comment type="subcellular location">
    <subcellularLocation>
        <location evidence="1">Cytoplasm</location>
    </subcellularLocation>
</comment>
<comment type="similarity">
    <text evidence="1">Belongs to the diaminopimelate epimerase family.</text>
</comment>
<protein>
    <recommendedName>
        <fullName evidence="1">Diaminopimelate epimerase</fullName>
        <shortName evidence="1">DAP epimerase</shortName>
        <ecNumber evidence="1">5.1.1.7</ecNumber>
    </recommendedName>
    <alternativeName>
        <fullName evidence="1">PLP-independent amino acid racemase</fullName>
    </alternativeName>
</protein>
<feature type="chain" id="PRO_1000011897" description="Diaminopimelate epimerase">
    <location>
        <begin position="1"/>
        <end position="281"/>
    </location>
</feature>
<feature type="active site" description="Proton donor" evidence="1">
    <location>
        <position position="74"/>
    </location>
</feature>
<feature type="active site" description="Proton acceptor" evidence="1">
    <location>
        <position position="225"/>
    </location>
</feature>
<feature type="binding site" evidence="1">
    <location>
        <position position="14"/>
    </location>
    <ligand>
        <name>substrate</name>
    </ligand>
</feature>
<feature type="binding site" evidence="1">
    <location>
        <position position="65"/>
    </location>
    <ligand>
        <name>substrate</name>
    </ligand>
</feature>
<feature type="binding site" evidence="1">
    <location>
        <begin position="75"/>
        <end position="76"/>
    </location>
    <ligand>
        <name>substrate</name>
    </ligand>
</feature>
<feature type="binding site" evidence="1">
    <location>
        <position position="165"/>
    </location>
    <ligand>
        <name>substrate</name>
    </ligand>
</feature>
<feature type="binding site" evidence="1">
    <location>
        <position position="198"/>
    </location>
    <ligand>
        <name>substrate</name>
    </ligand>
</feature>
<feature type="binding site" evidence="1">
    <location>
        <begin position="216"/>
        <end position="217"/>
    </location>
    <ligand>
        <name>substrate</name>
    </ligand>
</feature>
<feature type="binding site" evidence="1">
    <location>
        <begin position="226"/>
        <end position="227"/>
    </location>
    <ligand>
        <name>substrate</name>
    </ligand>
</feature>
<feature type="site" description="Could be important to modulate the pK values of the two catalytic cysteine residues" evidence="1">
    <location>
        <position position="167"/>
    </location>
</feature>
<feature type="site" description="Could be important to modulate the pK values of the two catalytic cysteine residues" evidence="1">
    <location>
        <position position="216"/>
    </location>
</feature>
<reference key="1">
    <citation type="journal article" date="2006" name="Proc. Natl. Acad. Sci. U.S.A.">
        <title>Genome reduction in Leptospira borgpetersenii reflects limited transmission potential.</title>
        <authorList>
            <person name="Bulach D.M."/>
            <person name="Zuerner R.L."/>
            <person name="Wilson P."/>
            <person name="Seemann T."/>
            <person name="McGrath A."/>
            <person name="Cullen P.A."/>
            <person name="Davis J."/>
            <person name="Johnson M."/>
            <person name="Kuczek E."/>
            <person name="Alt D.P."/>
            <person name="Peterson-Burch B."/>
            <person name="Coppel R.L."/>
            <person name="Rood J.I."/>
            <person name="Davies J.K."/>
            <person name="Adler B."/>
        </authorList>
    </citation>
    <scope>NUCLEOTIDE SEQUENCE [LARGE SCALE GENOMIC DNA]</scope>
    <source>
        <strain>JB197</strain>
    </source>
</reference>
<sequence>MAALKFTKMEGIGNDYIYIDSTQANIRLTPEQIQKISNRNFGIGSDGVIFIRNSKQGDFMMDMYNSDGSSSEMCGNGIRCVAKYIYDHGLTNSKNPKIETGAGVLEVDLKIGSGNKVDFVSVNMGKPILVPSKIPVNWKDEEAIIDQTFEIAGKNLKFTAVSMGNPHCVIFVDDCDQFPVTGIGPLIERHPIFPKRINVEFVTVRGKDHFYQRTWERGAGETLACGTGACAVTVAGNLTGKSGKEVKIDLRGGTLRIQWQESGNVLMTGPAKEIFSGEIEV</sequence>